<comment type="function">
    <text evidence="1">One of the components of the core complex of photosystem II (PSII), required for its stability and/or assembly. PSII is a light-driven water:plastoquinone oxidoreductase that uses light energy to abstract electrons from H(2)O, generating O(2) and a proton gradient subsequently used for ATP formation. It consists of a core antenna complex that captures photons, and an electron transfer chain that converts photonic excitation into a charge separation.</text>
</comment>
<comment type="subunit">
    <text evidence="1">PSII is composed of 1 copy each of membrane proteins PsbA, PsbB, PsbC, PsbD, PsbE, PsbF, PsbH, PsbI, PsbJ, PsbK, PsbL, PsbM, PsbT, PsbX, PsbY, PsbZ, Psb30/Ycf12, at least 3 peripheral proteins of the oxygen-evolving complex and a large number of cofactors. It forms dimeric complexes.</text>
</comment>
<comment type="subcellular location">
    <subcellularLocation>
        <location evidence="1">Plastid</location>
        <location evidence="1">Chloroplast thylakoid membrane</location>
        <topology evidence="1">Single-pass membrane protein</topology>
    </subcellularLocation>
</comment>
<comment type="similarity">
    <text evidence="1">Belongs to the PsbI family.</text>
</comment>
<gene>
    <name evidence="1" type="primary">psbI</name>
</gene>
<keyword id="KW-0150">Chloroplast</keyword>
<keyword id="KW-0472">Membrane</keyword>
<keyword id="KW-0602">Photosynthesis</keyword>
<keyword id="KW-0604">Photosystem II</keyword>
<keyword id="KW-0934">Plastid</keyword>
<keyword id="KW-0674">Reaction center</keyword>
<keyword id="KW-0793">Thylakoid</keyword>
<keyword id="KW-0812">Transmembrane</keyword>
<keyword id="KW-1133">Transmembrane helix</keyword>
<geneLocation type="chloroplast"/>
<proteinExistence type="inferred from homology"/>
<evidence type="ECO:0000255" key="1">
    <source>
        <dbReference type="HAMAP-Rule" id="MF_01316"/>
    </source>
</evidence>
<feature type="chain" id="PRO_0000219650" description="Photosystem II reaction center protein I">
    <location>
        <begin position="1"/>
        <end position="36"/>
    </location>
</feature>
<feature type="transmembrane region" description="Helical" evidence="1">
    <location>
        <begin position="4"/>
        <end position="24"/>
    </location>
</feature>
<dbReference type="EMBL" id="AP004638">
    <property type="protein sequence ID" value="BAB84198.1"/>
    <property type="molecule type" value="Genomic_DNA"/>
</dbReference>
<dbReference type="RefSeq" id="NP_569611.1">
    <property type="nucleotide sequence ID" value="NC_003386.1"/>
</dbReference>
<dbReference type="SMR" id="Q8WI33"/>
<dbReference type="GeneID" id="2545145"/>
<dbReference type="GO" id="GO:0009535">
    <property type="term" value="C:chloroplast thylakoid membrane"/>
    <property type="evidence" value="ECO:0007669"/>
    <property type="project" value="UniProtKB-SubCell"/>
</dbReference>
<dbReference type="GO" id="GO:0009539">
    <property type="term" value="C:photosystem II reaction center"/>
    <property type="evidence" value="ECO:0007669"/>
    <property type="project" value="InterPro"/>
</dbReference>
<dbReference type="GO" id="GO:0015979">
    <property type="term" value="P:photosynthesis"/>
    <property type="evidence" value="ECO:0007669"/>
    <property type="project" value="UniProtKB-UniRule"/>
</dbReference>
<dbReference type="HAMAP" id="MF_01316">
    <property type="entry name" value="PSII_PsbI"/>
    <property type="match status" value="1"/>
</dbReference>
<dbReference type="InterPro" id="IPR003686">
    <property type="entry name" value="PSII_PsbI"/>
</dbReference>
<dbReference type="InterPro" id="IPR037271">
    <property type="entry name" value="PSII_PsbI_sf"/>
</dbReference>
<dbReference type="NCBIfam" id="NF002735">
    <property type="entry name" value="PRK02655.1"/>
    <property type="match status" value="1"/>
</dbReference>
<dbReference type="PANTHER" id="PTHR35772">
    <property type="entry name" value="PHOTOSYSTEM II REACTION CENTER PROTEIN I"/>
    <property type="match status" value="1"/>
</dbReference>
<dbReference type="PANTHER" id="PTHR35772:SF1">
    <property type="entry name" value="PHOTOSYSTEM II REACTION CENTER PROTEIN I"/>
    <property type="match status" value="1"/>
</dbReference>
<dbReference type="Pfam" id="PF02532">
    <property type="entry name" value="PsbI"/>
    <property type="match status" value="1"/>
</dbReference>
<dbReference type="SUPFAM" id="SSF161041">
    <property type="entry name" value="Photosystem II reaction center protein I, PsbI"/>
    <property type="match status" value="1"/>
</dbReference>
<protein>
    <recommendedName>
        <fullName evidence="1">Photosystem II reaction center protein I</fullName>
        <shortName evidence="1">PSII-I</shortName>
    </recommendedName>
    <alternativeName>
        <fullName evidence="1">PSII 4.8 kDa protein</fullName>
    </alternativeName>
</protein>
<reference key="1">
    <citation type="journal article" date="2004" name="Mol. Biol. Evol.">
        <title>Chloroplast phylogeny indicates that bryophytes are monophyletic.</title>
        <authorList>
            <person name="Nishiyama T."/>
            <person name="Wolf P.G."/>
            <person name="Kugita M."/>
            <person name="Sinclair R.B."/>
            <person name="Sugita M."/>
            <person name="Sugiura C."/>
            <person name="Wakasugi T."/>
            <person name="Yamada K."/>
            <person name="Yoshinaga K."/>
            <person name="Yamaguchi K."/>
            <person name="Ueda K."/>
            <person name="Hasebe M."/>
        </authorList>
    </citation>
    <scope>NUCLEOTIDE SEQUENCE [LARGE SCALE GENOMIC DNA]</scope>
    <source>
        <strain>Kingyoku</strain>
    </source>
</reference>
<sequence>MLTLKLFVYTVVILFISLFVFGFLSNDPGRNPGRKE</sequence>
<name>PSBI_PSINU</name>
<accession>Q8WI33</accession>
<organism>
    <name type="scientific">Psilotum nudum</name>
    <name type="common">Whisk fern</name>
    <name type="synonym">Lycopodium nudum</name>
    <dbReference type="NCBI Taxonomy" id="3240"/>
    <lineage>
        <taxon>Eukaryota</taxon>
        <taxon>Viridiplantae</taxon>
        <taxon>Streptophyta</taxon>
        <taxon>Embryophyta</taxon>
        <taxon>Tracheophyta</taxon>
        <taxon>Polypodiopsida</taxon>
        <taxon>Ophioglossidae</taxon>
        <taxon>Psilotales</taxon>
        <taxon>Psilotaceae</taxon>
        <taxon>Psilotum</taxon>
    </lineage>
</organism>